<keyword id="KW-0325">Glycoprotein</keyword>
<keyword id="KW-1035">Host cytoplasm</keyword>
<keyword id="KW-1048">Host nucleus</keyword>
<keyword id="KW-1185">Reference proteome</keyword>
<keyword id="KW-0964">Secreted</keyword>
<keyword id="KW-0732">Signal</keyword>
<keyword id="KW-0843">Virulence</keyword>
<dbReference type="EMBL" id="CCYD01003055">
    <property type="protein sequence ID" value="CEG49414.1"/>
    <property type="molecule type" value="Genomic_DNA"/>
</dbReference>
<dbReference type="SMR" id="A0A0P1B6Y2"/>
<dbReference type="GlyCosmos" id="A0A0P1B6Y2">
    <property type="glycosylation" value="1 site, No reported glycans"/>
</dbReference>
<dbReference type="EnsemblProtists" id="CEG49414">
    <property type="protein sequence ID" value="CEG49414"/>
    <property type="gene ID" value="CEG49414"/>
</dbReference>
<dbReference type="OrthoDB" id="128369at2759"/>
<dbReference type="Proteomes" id="UP000054928">
    <property type="component" value="Unassembled WGS sequence"/>
</dbReference>
<dbReference type="GO" id="GO:0005576">
    <property type="term" value="C:extracellular region"/>
    <property type="evidence" value="ECO:0007669"/>
    <property type="project" value="UniProtKB-SubCell"/>
</dbReference>
<dbReference type="GO" id="GO:0030430">
    <property type="term" value="C:host cell cytoplasm"/>
    <property type="evidence" value="ECO:0007669"/>
    <property type="project" value="UniProtKB-SubCell"/>
</dbReference>
<dbReference type="GO" id="GO:0042025">
    <property type="term" value="C:host cell nucleus"/>
    <property type="evidence" value="ECO:0007669"/>
    <property type="project" value="UniProtKB-SubCell"/>
</dbReference>
<dbReference type="Gene3D" id="1.10.10.2460">
    <property type="match status" value="1"/>
</dbReference>
<dbReference type="InterPro" id="IPR031825">
    <property type="entry name" value="RXLR"/>
</dbReference>
<dbReference type="Pfam" id="PF16810">
    <property type="entry name" value="RXLR"/>
    <property type="match status" value="1"/>
</dbReference>
<sequence length="119" mass="13460">MRLSYIFVVVATIITNCDIASASLRAIMSDTASGNGLGTRILRQTNDSDDLEPIRHAMLDMELLEKIAKDPKYAEEVFGNWRHNGQTKAEMENRLQSNGLLGKYRFIIDRYAEHLANSE</sequence>
<accession>A0A0P1B6Y2</accession>
<protein>
    <recommendedName>
        <fullName evidence="4">Secreted RxLR effector protein RXLR-C04</fullName>
    </recommendedName>
</protein>
<comment type="function">
    <text evidence="3">Secreted effector that suppresses pattern-triggered immunity (PTI) in plant host.</text>
</comment>
<comment type="subcellular location">
    <subcellularLocation>
        <location evidence="3">Secreted</location>
    </subcellularLocation>
    <subcellularLocation>
        <location evidence="3">Host cytoplasm</location>
    </subcellularLocation>
    <subcellularLocation>
        <location evidence="3">Host nucleus</location>
    </subcellularLocation>
</comment>
<comment type="induction">
    <text evidence="3">Expression is up-regulated in spores.</text>
</comment>
<comment type="domain">
    <text evidence="6">The RxLR-dEER motif acts to carry the protein into the host cell cytoplasm through binding to cell surface phosphatidylinositol-3-phosphate.</text>
</comment>
<comment type="similarity">
    <text evidence="5">Belongs to the RxLR effector family.</text>
</comment>
<name>RLR04_PLAHL</name>
<reference key="1">
    <citation type="journal article" date="2015" name="BMC Genomics">
        <title>Genome analyses of the sunflower pathogen Plasmopara halstedii provide insights into effector evolution in downy mildews and Phytophthora.</title>
        <authorList>
            <person name="Sharma R."/>
            <person name="Xia X."/>
            <person name="Cano L.M."/>
            <person name="Evangelisti E."/>
            <person name="Kemen E."/>
            <person name="Judelson H."/>
            <person name="Oome S."/>
            <person name="Sambles C."/>
            <person name="van den Hoogen D.J."/>
            <person name="Kitner M."/>
            <person name="Klein J."/>
            <person name="Meijer H.J."/>
            <person name="Spring O."/>
            <person name="Win J."/>
            <person name="Zipper R."/>
            <person name="Bode H.B."/>
            <person name="Govers F."/>
            <person name="Kamoun S."/>
            <person name="Schornack S."/>
            <person name="Studholme D.J."/>
            <person name="Van den Ackerveken G."/>
            <person name="Thines M."/>
        </authorList>
    </citation>
    <scope>NUCLEOTIDE SEQUENCE [LARGE SCALE GENOMIC DNA]</scope>
</reference>
<reference key="2">
    <citation type="journal article" date="2019" name="Plant J.">
        <title>Sunflower resistance to multiple downy mildew pathotypes revealed by recognition of conserved effectors of the oomycete Plasmopara halstedii.</title>
        <authorList>
            <person name="Pecrix Y."/>
            <person name="Buendia L."/>
            <person name="Penouilh-Suzette C."/>
            <person name="Marechaux M."/>
            <person name="Legrand L."/>
            <person name="Bouchez O."/>
            <person name="Rengel D."/>
            <person name="Gouzy J."/>
            <person name="Cottret L."/>
            <person name="Vear F."/>
            <person name="Godiard L."/>
        </authorList>
    </citation>
    <scope>DOMAIN</scope>
    <scope>INDUCTION</scope>
    <scope>FUNCTION</scope>
    <scope>SUBCELLULAR LOCATION</scope>
</reference>
<feature type="signal peptide" evidence="1">
    <location>
        <begin position="1"/>
        <end position="22"/>
    </location>
</feature>
<feature type="chain" id="PRO_5006059233" description="Secreted RxLR effector protein RXLR-C04">
    <location>
        <begin position="23"/>
        <end position="119"/>
    </location>
</feature>
<feature type="short sequence motif" description="RxLR-dEER" evidence="6">
    <location>
        <begin position="40"/>
        <end position="77"/>
    </location>
</feature>
<feature type="glycosylation site" description="N-linked (GlcNAc...) asparagine" evidence="2">
    <location>
        <position position="46"/>
    </location>
</feature>
<gene>
    <name evidence="4" type="primary">RXLR-C04</name>
</gene>
<proteinExistence type="evidence at transcript level"/>
<evidence type="ECO:0000255" key="1"/>
<evidence type="ECO:0000255" key="2">
    <source>
        <dbReference type="PROSITE-ProRule" id="PRU00498"/>
    </source>
</evidence>
<evidence type="ECO:0000269" key="3">
    <source>
    </source>
</evidence>
<evidence type="ECO:0000303" key="4">
    <source>
    </source>
</evidence>
<evidence type="ECO:0000305" key="5"/>
<evidence type="ECO:0000305" key="6">
    <source>
    </source>
</evidence>
<organism>
    <name type="scientific">Plasmopara halstedii</name>
    <name type="common">Downy mildew of sunflower</name>
    <dbReference type="NCBI Taxonomy" id="4781"/>
    <lineage>
        <taxon>Eukaryota</taxon>
        <taxon>Sar</taxon>
        <taxon>Stramenopiles</taxon>
        <taxon>Oomycota</taxon>
        <taxon>Peronosporales</taxon>
        <taxon>Peronosporaceae</taxon>
        <taxon>Plasmopara</taxon>
    </lineage>
</organism>